<name>KAD_SHIDS</name>
<dbReference type="EC" id="2.7.4.3" evidence="2"/>
<dbReference type="EMBL" id="CP000034">
    <property type="protein sequence ID" value="ABB60653.1"/>
    <property type="molecule type" value="Genomic_DNA"/>
</dbReference>
<dbReference type="RefSeq" id="WP_005019454.1">
    <property type="nucleotide sequence ID" value="NC_007606.1"/>
</dbReference>
<dbReference type="RefSeq" id="YP_402142.1">
    <property type="nucleotide sequence ID" value="NC_007606.1"/>
</dbReference>
<dbReference type="SMR" id="Q32J54"/>
<dbReference type="STRING" id="300267.SDY_0445"/>
<dbReference type="EnsemblBacteria" id="ABB60653">
    <property type="protein sequence ID" value="ABB60653"/>
    <property type="gene ID" value="SDY_0445"/>
</dbReference>
<dbReference type="KEGG" id="sdy:SDY_0445"/>
<dbReference type="PATRIC" id="fig|300267.13.peg.528"/>
<dbReference type="HOGENOM" id="CLU_032354_1_2_6"/>
<dbReference type="UniPathway" id="UPA00588">
    <property type="reaction ID" value="UER00649"/>
</dbReference>
<dbReference type="Proteomes" id="UP000002716">
    <property type="component" value="Chromosome"/>
</dbReference>
<dbReference type="GO" id="GO:0005737">
    <property type="term" value="C:cytoplasm"/>
    <property type="evidence" value="ECO:0007669"/>
    <property type="project" value="UniProtKB-SubCell"/>
</dbReference>
<dbReference type="GO" id="GO:0004017">
    <property type="term" value="F:adenylate kinase activity"/>
    <property type="evidence" value="ECO:0007669"/>
    <property type="project" value="UniProtKB-UniRule"/>
</dbReference>
<dbReference type="GO" id="GO:0005524">
    <property type="term" value="F:ATP binding"/>
    <property type="evidence" value="ECO:0007669"/>
    <property type="project" value="UniProtKB-UniRule"/>
</dbReference>
<dbReference type="GO" id="GO:0044209">
    <property type="term" value="P:AMP salvage"/>
    <property type="evidence" value="ECO:0007669"/>
    <property type="project" value="UniProtKB-UniRule"/>
</dbReference>
<dbReference type="CDD" id="cd01428">
    <property type="entry name" value="ADK"/>
    <property type="match status" value="1"/>
</dbReference>
<dbReference type="FunFam" id="3.40.50.300:FF:000106">
    <property type="entry name" value="Adenylate kinase mitochondrial"/>
    <property type="match status" value="1"/>
</dbReference>
<dbReference type="Gene3D" id="3.40.50.300">
    <property type="entry name" value="P-loop containing nucleotide triphosphate hydrolases"/>
    <property type="match status" value="1"/>
</dbReference>
<dbReference type="HAMAP" id="MF_00235">
    <property type="entry name" value="Adenylate_kinase_Adk"/>
    <property type="match status" value="1"/>
</dbReference>
<dbReference type="InterPro" id="IPR006259">
    <property type="entry name" value="Adenyl_kin_sub"/>
</dbReference>
<dbReference type="InterPro" id="IPR000850">
    <property type="entry name" value="Adenylat/UMP-CMP_kin"/>
</dbReference>
<dbReference type="InterPro" id="IPR033690">
    <property type="entry name" value="Adenylat_kinase_CS"/>
</dbReference>
<dbReference type="InterPro" id="IPR007862">
    <property type="entry name" value="Adenylate_kinase_lid-dom"/>
</dbReference>
<dbReference type="InterPro" id="IPR027417">
    <property type="entry name" value="P-loop_NTPase"/>
</dbReference>
<dbReference type="NCBIfam" id="TIGR01351">
    <property type="entry name" value="adk"/>
    <property type="match status" value="1"/>
</dbReference>
<dbReference type="NCBIfam" id="NF001379">
    <property type="entry name" value="PRK00279.1-1"/>
    <property type="match status" value="1"/>
</dbReference>
<dbReference type="NCBIfam" id="NF001380">
    <property type="entry name" value="PRK00279.1-2"/>
    <property type="match status" value="1"/>
</dbReference>
<dbReference type="NCBIfam" id="NF001381">
    <property type="entry name" value="PRK00279.1-3"/>
    <property type="match status" value="1"/>
</dbReference>
<dbReference type="NCBIfam" id="NF011100">
    <property type="entry name" value="PRK14527.1"/>
    <property type="match status" value="1"/>
</dbReference>
<dbReference type="PANTHER" id="PTHR23359">
    <property type="entry name" value="NUCLEOTIDE KINASE"/>
    <property type="match status" value="1"/>
</dbReference>
<dbReference type="Pfam" id="PF00406">
    <property type="entry name" value="ADK"/>
    <property type="match status" value="1"/>
</dbReference>
<dbReference type="Pfam" id="PF05191">
    <property type="entry name" value="ADK_lid"/>
    <property type="match status" value="1"/>
</dbReference>
<dbReference type="PRINTS" id="PR00094">
    <property type="entry name" value="ADENYLTKNASE"/>
</dbReference>
<dbReference type="SUPFAM" id="SSF52540">
    <property type="entry name" value="P-loop containing nucleoside triphosphate hydrolases"/>
    <property type="match status" value="1"/>
</dbReference>
<dbReference type="PROSITE" id="PS00113">
    <property type="entry name" value="ADENYLATE_KINASE"/>
    <property type="match status" value="1"/>
</dbReference>
<sequence>MRIILLGAPGAGKGTQAQFIMEKYGIPQISTGDMLRAAVKSGSELGKQAKDIMDAGKLVTDELVIALVKGRIAQEDCRNGFLLDGFPRTIPQADAMKEAGINVDYVLEFDVPDELIVDRIVGRRVHAPSGRVYHVKFNPPKVEGKDDVTGEELTTRKDDQEETVRKRLVEYHQMTAPLIGYYSKEAEAGNTKYAKVDGTKPVAEVRADLEKILG</sequence>
<reference key="1">
    <citation type="journal article" date="2005" name="Nucleic Acids Res.">
        <title>Genome dynamics and diversity of Shigella species, the etiologic agents of bacillary dysentery.</title>
        <authorList>
            <person name="Yang F."/>
            <person name="Yang J."/>
            <person name="Zhang X."/>
            <person name="Chen L."/>
            <person name="Jiang Y."/>
            <person name="Yan Y."/>
            <person name="Tang X."/>
            <person name="Wang J."/>
            <person name="Xiong Z."/>
            <person name="Dong J."/>
            <person name="Xue Y."/>
            <person name="Zhu Y."/>
            <person name="Xu X."/>
            <person name="Sun L."/>
            <person name="Chen S."/>
            <person name="Nie H."/>
            <person name="Peng J."/>
            <person name="Xu J."/>
            <person name="Wang Y."/>
            <person name="Yuan Z."/>
            <person name="Wen Y."/>
            <person name="Yao Z."/>
            <person name="Shen Y."/>
            <person name="Qiang B."/>
            <person name="Hou Y."/>
            <person name="Yu J."/>
            <person name="Jin Q."/>
        </authorList>
    </citation>
    <scope>NUCLEOTIDE SEQUENCE [LARGE SCALE GENOMIC DNA]</scope>
    <source>
        <strain>Sd197</strain>
    </source>
</reference>
<accession>Q32J54</accession>
<protein>
    <recommendedName>
        <fullName evidence="2">Adenylate kinase</fullName>
        <shortName evidence="2">AK</shortName>
        <ecNumber evidence="2">2.7.4.3</ecNumber>
    </recommendedName>
    <alternativeName>
        <fullName evidence="2">ATP-AMP transphosphorylase</fullName>
    </alternativeName>
    <alternativeName>
        <fullName evidence="2">ATP:AMP phosphotransferase</fullName>
    </alternativeName>
    <alternativeName>
        <fullName evidence="2">Adenylate monophosphate kinase</fullName>
    </alternativeName>
</protein>
<proteinExistence type="inferred from homology"/>
<keyword id="KW-0007">Acetylation</keyword>
<keyword id="KW-0067">ATP-binding</keyword>
<keyword id="KW-0963">Cytoplasm</keyword>
<keyword id="KW-0418">Kinase</keyword>
<keyword id="KW-0545">Nucleotide biosynthesis</keyword>
<keyword id="KW-0547">Nucleotide-binding</keyword>
<keyword id="KW-1185">Reference proteome</keyword>
<keyword id="KW-0808">Transferase</keyword>
<gene>
    <name evidence="2" type="primary">adk</name>
    <name type="ordered locus">SDY_0445</name>
</gene>
<feature type="chain" id="PRO_1000058905" description="Adenylate kinase">
    <location>
        <begin position="1"/>
        <end position="214"/>
    </location>
</feature>
<feature type="region of interest" description="NMP" evidence="2">
    <location>
        <begin position="30"/>
        <end position="59"/>
    </location>
</feature>
<feature type="region of interest" description="LID">
    <location>
        <begin position="122"/>
        <end position="159"/>
    </location>
</feature>
<feature type="binding site" evidence="2">
    <location>
        <begin position="10"/>
        <end position="15"/>
    </location>
    <ligand>
        <name>ATP</name>
        <dbReference type="ChEBI" id="CHEBI:30616"/>
    </ligand>
</feature>
<feature type="binding site" evidence="2">
    <location>
        <position position="31"/>
    </location>
    <ligand>
        <name>AMP</name>
        <dbReference type="ChEBI" id="CHEBI:456215"/>
    </ligand>
</feature>
<feature type="binding site" evidence="2">
    <location>
        <position position="36"/>
    </location>
    <ligand>
        <name>AMP</name>
        <dbReference type="ChEBI" id="CHEBI:456215"/>
    </ligand>
</feature>
<feature type="binding site" evidence="2">
    <location>
        <begin position="57"/>
        <end position="59"/>
    </location>
    <ligand>
        <name>AMP</name>
        <dbReference type="ChEBI" id="CHEBI:456215"/>
    </ligand>
</feature>
<feature type="binding site" evidence="2">
    <location>
        <begin position="85"/>
        <end position="88"/>
    </location>
    <ligand>
        <name>AMP</name>
        <dbReference type="ChEBI" id="CHEBI:456215"/>
    </ligand>
</feature>
<feature type="binding site" evidence="2">
    <location>
        <position position="92"/>
    </location>
    <ligand>
        <name>AMP</name>
        <dbReference type="ChEBI" id="CHEBI:456215"/>
    </ligand>
</feature>
<feature type="binding site" evidence="2">
    <location>
        <position position="123"/>
    </location>
    <ligand>
        <name>ATP</name>
        <dbReference type="ChEBI" id="CHEBI:30616"/>
    </ligand>
</feature>
<feature type="binding site" evidence="2">
    <location>
        <begin position="132"/>
        <end position="133"/>
    </location>
    <ligand>
        <name>ATP</name>
        <dbReference type="ChEBI" id="CHEBI:30616"/>
    </ligand>
</feature>
<feature type="binding site" evidence="2">
    <location>
        <position position="156"/>
    </location>
    <ligand>
        <name>AMP</name>
        <dbReference type="ChEBI" id="CHEBI:456215"/>
    </ligand>
</feature>
<feature type="binding site" evidence="2">
    <location>
        <position position="167"/>
    </location>
    <ligand>
        <name>AMP</name>
        <dbReference type="ChEBI" id="CHEBI:456215"/>
    </ligand>
</feature>
<feature type="binding site" evidence="2">
    <location>
        <position position="200"/>
    </location>
    <ligand>
        <name>ATP</name>
        <dbReference type="ChEBI" id="CHEBI:30616"/>
    </ligand>
</feature>
<feature type="modified residue" description="N6-acetyllysine" evidence="1">
    <location>
        <position position="192"/>
    </location>
</feature>
<evidence type="ECO:0000250" key="1"/>
<evidence type="ECO:0000255" key="2">
    <source>
        <dbReference type="HAMAP-Rule" id="MF_00235"/>
    </source>
</evidence>
<comment type="function">
    <text evidence="2">Catalyzes the reversible transfer of the terminal phosphate group between ATP and AMP. Plays an important role in cellular energy homeostasis and in adenine nucleotide metabolism.</text>
</comment>
<comment type="catalytic activity">
    <reaction evidence="2">
        <text>AMP + ATP = 2 ADP</text>
        <dbReference type="Rhea" id="RHEA:12973"/>
        <dbReference type="ChEBI" id="CHEBI:30616"/>
        <dbReference type="ChEBI" id="CHEBI:456215"/>
        <dbReference type="ChEBI" id="CHEBI:456216"/>
        <dbReference type="EC" id="2.7.4.3"/>
    </reaction>
</comment>
<comment type="pathway">
    <text evidence="2">Purine metabolism; AMP biosynthesis via salvage pathway; AMP from ADP: step 1/1.</text>
</comment>
<comment type="subunit">
    <text evidence="2">Monomer.</text>
</comment>
<comment type="subcellular location">
    <subcellularLocation>
        <location evidence="2">Cytoplasm</location>
    </subcellularLocation>
</comment>
<comment type="domain">
    <text evidence="2">Consists of three domains, a large central CORE domain and two small peripheral domains, NMPbind and LID, which undergo movements during catalysis. The LID domain closes over the site of phosphoryl transfer upon ATP binding. Assembling and dissambling the active center during each catalytic cycle provides an effective means to prevent ATP hydrolysis.</text>
</comment>
<comment type="similarity">
    <text evidence="2">Belongs to the adenylate kinase family.</text>
</comment>
<organism>
    <name type="scientific">Shigella dysenteriae serotype 1 (strain Sd197)</name>
    <dbReference type="NCBI Taxonomy" id="300267"/>
    <lineage>
        <taxon>Bacteria</taxon>
        <taxon>Pseudomonadati</taxon>
        <taxon>Pseudomonadota</taxon>
        <taxon>Gammaproteobacteria</taxon>
        <taxon>Enterobacterales</taxon>
        <taxon>Enterobacteriaceae</taxon>
        <taxon>Shigella</taxon>
    </lineage>
</organism>